<comment type="function">
    <text evidence="1">Thiol-specific peroxidase that catalyzes the reduction of hydrogen peroxide and organic hydroperoxides to water and alcohols, respectively. Plays a role in cell protection against oxidative stress by detoxifying peroxides and as sensor of hydrogen peroxide-mediated signaling events. Might participate in the signaling cascades of growth factors and tumor necrosis factor-alpha by regulating the intracellular concentrations of H(2)O(2).</text>
</comment>
<comment type="catalytic activity">
    <reaction evidence="1">
        <text>a hydroperoxide + [thioredoxin]-dithiol = an alcohol + [thioredoxin]-disulfide + H2O</text>
        <dbReference type="Rhea" id="RHEA:62620"/>
        <dbReference type="Rhea" id="RHEA-COMP:10698"/>
        <dbReference type="Rhea" id="RHEA-COMP:10700"/>
        <dbReference type="ChEBI" id="CHEBI:15377"/>
        <dbReference type="ChEBI" id="CHEBI:29950"/>
        <dbReference type="ChEBI" id="CHEBI:30879"/>
        <dbReference type="ChEBI" id="CHEBI:35924"/>
        <dbReference type="ChEBI" id="CHEBI:50058"/>
        <dbReference type="EC" id="1.11.1.24"/>
    </reaction>
</comment>
<comment type="subunit">
    <text evidence="1">Homodimer; disulfide-linked, upon oxidation. 5 homodimers assemble to form a ring-like decamer. Interacts with TIPIN.</text>
</comment>
<comment type="subcellular location">
    <subcellularLocation>
        <location evidence="1">Cytoplasm</location>
    </subcellularLocation>
</comment>
<comment type="PTM">
    <text evidence="1 2">The enzyme can be inactivated by further oxidation of the cysteine sulfenic acid (C(P)-SOH) to sulphinic acid (C(P)-SO2H) instead of its condensation to a disulfide bond. It can be reactivated by forming a transient disulfide bond with sulfiredoxin SRXN1, which reduces the cysteine sulfinic acid in an ATP- and Mg-dependent manner.</text>
</comment>
<comment type="PTM">
    <text evidence="1">Acetylation increases resistance to transition to high molecular-mass complexes. Deacetylated by HDAC6 which decreases reducing activity.</text>
</comment>
<comment type="miscellaneous">
    <text evidence="1">The active site is a conserved redox-active cysteine residue, the peroxidatic cysteine (C(P)), which makes the nucleophilic attack on the peroxide substrate. The peroxide oxidizes the C(P)-SH to cysteine sulfenic acid (C(P)-SOH), which then reacts with another cysteine residue, the resolving cysteine (C(R)), to form a disulfide bridge. The disulfide is subsequently reduced by an appropriate electron donor to complete the catalytic cycle. In this typical 2-Cys peroxiredoxin, C(R) is provided by the other dimeric subunit to form an intersubunit disulfide. The disulfide is subsequently reduced by thioredoxin.</text>
</comment>
<comment type="similarity">
    <text evidence="4">Belongs to the peroxiredoxin family. AhpC/Prx1 subfamily.</text>
</comment>
<dbReference type="EC" id="1.11.1.24" evidence="1"/>
<dbReference type="EMBL" id="AF305562">
    <property type="protein sequence ID" value="AAG53659.1"/>
    <property type="molecule type" value="mRNA"/>
</dbReference>
<dbReference type="EMBL" id="BC102351">
    <property type="protein sequence ID" value="AAI02352.1"/>
    <property type="molecule type" value="mRNA"/>
</dbReference>
<dbReference type="RefSeq" id="NP_777188.1">
    <property type="nucleotide sequence ID" value="NM_174763.2"/>
</dbReference>
<dbReference type="RefSeq" id="XP_005208710.1">
    <property type="nucleotide sequence ID" value="XM_005208653.3"/>
</dbReference>
<dbReference type="RefSeq" id="XP_010805021.1">
    <property type="nucleotide sequence ID" value="XM_010806719.2"/>
</dbReference>
<dbReference type="SMR" id="Q9BGI3"/>
<dbReference type="FunCoup" id="Q9BGI3">
    <property type="interactions" value="1315"/>
</dbReference>
<dbReference type="STRING" id="9913.ENSBTAP00000015996"/>
<dbReference type="PeroxiBase" id="4473">
    <property type="entry name" value="Bt2CysPrx02"/>
</dbReference>
<dbReference type="PaxDb" id="9913-ENSBTAP00000015996"/>
<dbReference type="PeptideAtlas" id="Q9BGI3"/>
<dbReference type="GeneID" id="286793"/>
<dbReference type="KEGG" id="bta:286793"/>
<dbReference type="CTD" id="7001"/>
<dbReference type="VEuPathDB" id="HostDB:ENSBTAG00000012062"/>
<dbReference type="eggNOG" id="KOG0852">
    <property type="taxonomic scope" value="Eukaryota"/>
</dbReference>
<dbReference type="HOGENOM" id="CLU_042529_21_0_1"/>
<dbReference type="InParanoid" id="Q9BGI3"/>
<dbReference type="OMA" id="VCTKELC"/>
<dbReference type="OrthoDB" id="185659at2759"/>
<dbReference type="TreeFam" id="TF105181"/>
<dbReference type="Reactome" id="R-BTA-3299685">
    <property type="pathway name" value="Detoxification of Reactive Oxygen Species"/>
</dbReference>
<dbReference type="Reactome" id="R-BTA-5628897">
    <property type="pathway name" value="TP53 Regulates Metabolic Genes"/>
</dbReference>
<dbReference type="Proteomes" id="UP000009136">
    <property type="component" value="Chromosome 7"/>
</dbReference>
<dbReference type="Bgee" id="ENSBTAG00000012062">
    <property type="expression patterns" value="Expressed in oocyte and 107 other cell types or tissues"/>
</dbReference>
<dbReference type="GO" id="GO:0005829">
    <property type="term" value="C:cytosol"/>
    <property type="evidence" value="ECO:0000318"/>
    <property type="project" value="GO_Central"/>
</dbReference>
<dbReference type="GO" id="GO:0008379">
    <property type="term" value="F:thioredoxin peroxidase activity"/>
    <property type="evidence" value="ECO:0000318"/>
    <property type="project" value="GO_Central"/>
</dbReference>
<dbReference type="GO" id="GO:0045454">
    <property type="term" value="P:cell redox homeostasis"/>
    <property type="evidence" value="ECO:0000318"/>
    <property type="project" value="GO_Central"/>
</dbReference>
<dbReference type="GO" id="GO:0002357">
    <property type="term" value="P:defense response to tumor cell"/>
    <property type="evidence" value="ECO:0007669"/>
    <property type="project" value="Ensembl"/>
</dbReference>
<dbReference type="GO" id="GO:0097191">
    <property type="term" value="P:extrinsic apoptotic signaling pathway"/>
    <property type="evidence" value="ECO:0007669"/>
    <property type="project" value="Ensembl"/>
</dbReference>
<dbReference type="GO" id="GO:0042744">
    <property type="term" value="P:hydrogen peroxide catabolic process"/>
    <property type="evidence" value="ECO:0000318"/>
    <property type="project" value="GO_Central"/>
</dbReference>
<dbReference type="GO" id="GO:0045321">
    <property type="term" value="P:leukocyte activation"/>
    <property type="evidence" value="ECO:0000318"/>
    <property type="project" value="GO_Central"/>
</dbReference>
<dbReference type="GO" id="GO:2001240">
    <property type="term" value="P:negative regulation of extrinsic apoptotic signaling pathway in absence of ligand"/>
    <property type="evidence" value="ECO:0007669"/>
    <property type="project" value="Ensembl"/>
</dbReference>
<dbReference type="GO" id="GO:0031665">
    <property type="term" value="P:negative regulation of lipopolysaccharide-mediated signaling pathway"/>
    <property type="evidence" value="ECO:0007669"/>
    <property type="project" value="Ensembl"/>
</dbReference>
<dbReference type="GO" id="GO:0045581">
    <property type="term" value="P:negative regulation of T cell differentiation"/>
    <property type="evidence" value="ECO:0007669"/>
    <property type="project" value="Ensembl"/>
</dbReference>
<dbReference type="GO" id="GO:0030194">
    <property type="term" value="P:positive regulation of blood coagulation"/>
    <property type="evidence" value="ECO:0007669"/>
    <property type="project" value="Ensembl"/>
</dbReference>
<dbReference type="GO" id="GO:0043410">
    <property type="term" value="P:positive regulation of MAPK cascade"/>
    <property type="evidence" value="ECO:0007669"/>
    <property type="project" value="Ensembl"/>
</dbReference>
<dbReference type="GO" id="GO:0010310">
    <property type="term" value="P:regulation of hydrogen peroxide metabolic process"/>
    <property type="evidence" value="ECO:0007669"/>
    <property type="project" value="Ensembl"/>
</dbReference>
<dbReference type="GO" id="GO:0019430">
    <property type="term" value="P:removal of superoxide radicals"/>
    <property type="evidence" value="ECO:0000318"/>
    <property type="project" value="GO_Central"/>
</dbReference>
<dbReference type="GO" id="GO:0002536">
    <property type="term" value="P:respiratory burst involved in inflammatory response"/>
    <property type="evidence" value="ECO:0007669"/>
    <property type="project" value="Ensembl"/>
</dbReference>
<dbReference type="GO" id="GO:0032496">
    <property type="term" value="P:response to lipopolysaccharide"/>
    <property type="evidence" value="ECO:0007669"/>
    <property type="project" value="Ensembl"/>
</dbReference>
<dbReference type="GO" id="GO:0006979">
    <property type="term" value="P:response to oxidative stress"/>
    <property type="evidence" value="ECO:0000318"/>
    <property type="project" value="GO_Central"/>
</dbReference>
<dbReference type="GO" id="GO:0043029">
    <property type="term" value="P:T cell homeostasis"/>
    <property type="evidence" value="ECO:0007669"/>
    <property type="project" value="Ensembl"/>
</dbReference>
<dbReference type="GO" id="GO:0042098">
    <property type="term" value="P:T cell proliferation"/>
    <property type="evidence" value="ECO:0007669"/>
    <property type="project" value="Ensembl"/>
</dbReference>
<dbReference type="GO" id="GO:0048538">
    <property type="term" value="P:thymus development"/>
    <property type="evidence" value="ECO:0007669"/>
    <property type="project" value="Ensembl"/>
</dbReference>
<dbReference type="CDD" id="cd03015">
    <property type="entry name" value="PRX_Typ2cys"/>
    <property type="match status" value="1"/>
</dbReference>
<dbReference type="FunFam" id="3.40.30.10:FF:000003">
    <property type="entry name" value="Peroxiredoxin 1"/>
    <property type="match status" value="1"/>
</dbReference>
<dbReference type="Gene3D" id="3.40.30.10">
    <property type="entry name" value="Glutaredoxin"/>
    <property type="match status" value="1"/>
</dbReference>
<dbReference type="InterPro" id="IPR000866">
    <property type="entry name" value="AhpC/TSA"/>
</dbReference>
<dbReference type="InterPro" id="IPR050217">
    <property type="entry name" value="Peroxiredoxin"/>
</dbReference>
<dbReference type="InterPro" id="IPR024706">
    <property type="entry name" value="Peroxiredoxin_AhpC-typ"/>
</dbReference>
<dbReference type="InterPro" id="IPR019479">
    <property type="entry name" value="Peroxiredoxin_C"/>
</dbReference>
<dbReference type="InterPro" id="IPR036249">
    <property type="entry name" value="Thioredoxin-like_sf"/>
</dbReference>
<dbReference type="InterPro" id="IPR013766">
    <property type="entry name" value="Thioredoxin_domain"/>
</dbReference>
<dbReference type="PANTHER" id="PTHR10681:SF161">
    <property type="entry name" value="PEROXIREDOXIN-2"/>
    <property type="match status" value="1"/>
</dbReference>
<dbReference type="PANTHER" id="PTHR10681">
    <property type="entry name" value="THIOREDOXIN PEROXIDASE"/>
    <property type="match status" value="1"/>
</dbReference>
<dbReference type="Pfam" id="PF10417">
    <property type="entry name" value="1-cysPrx_C"/>
    <property type="match status" value="1"/>
</dbReference>
<dbReference type="Pfam" id="PF00578">
    <property type="entry name" value="AhpC-TSA"/>
    <property type="match status" value="1"/>
</dbReference>
<dbReference type="PIRSF" id="PIRSF000239">
    <property type="entry name" value="AHPC"/>
    <property type="match status" value="1"/>
</dbReference>
<dbReference type="SUPFAM" id="SSF52833">
    <property type="entry name" value="Thioredoxin-like"/>
    <property type="match status" value="1"/>
</dbReference>
<dbReference type="PROSITE" id="PS51352">
    <property type="entry name" value="THIOREDOXIN_2"/>
    <property type="match status" value="1"/>
</dbReference>
<reference key="1">
    <citation type="submission" date="2000-09" db="EMBL/GenBank/DDBJ databases">
        <title>Cloning of 4 new bovine peroxiredoxins, and screening of the complete peroxiredoxin family in different bovine tissues.</title>
        <authorList>
            <person name="Leyens G."/>
            <person name="Donnay I."/>
            <person name="Knoops B."/>
        </authorList>
    </citation>
    <scope>NUCLEOTIDE SEQUENCE [MRNA]</scope>
    <source>
        <tissue>Liver</tissue>
    </source>
</reference>
<reference key="2">
    <citation type="submission" date="2005-08" db="EMBL/GenBank/DDBJ databases">
        <authorList>
            <consortium name="NIH - Mammalian Gene Collection (MGC) project"/>
        </authorList>
    </citation>
    <scope>NUCLEOTIDE SEQUENCE [LARGE SCALE MRNA]</scope>
    <source>
        <strain>Crossbred X Angus</strain>
        <tissue>Ileum</tissue>
    </source>
</reference>
<sequence length="199" mass="21946">MACVCKAHVGKPAPEFQATAVVDGAFKEVKLSDYKGKYVVLFFYPLDFTFVCPTEIVAFSDRAAEFHKLNCEVLGVSVDSQFTHLAWINTPRKEGGLGPLNIPLLADVTRKLSSDYGVLKEDEGIAYRGLFVIDGKGVLRQVTINDLPVGRSVDEALRLVQAFQYTDEHGEVCPAGWTPGSDTIKPNVDDSKEYFSKHN</sequence>
<feature type="chain" id="PRO_0000135079" description="Peroxiredoxin-2">
    <location>
        <begin position="1"/>
        <end position="199"/>
    </location>
</feature>
<feature type="domain" description="Thioredoxin" evidence="3">
    <location>
        <begin position="7"/>
        <end position="165"/>
    </location>
</feature>
<feature type="active site" description="Cysteine sulfenic acid (-SOH) intermediate" evidence="1">
    <location>
        <position position="52"/>
    </location>
</feature>
<feature type="modified residue" description="Phosphoserine" evidence="1">
    <location>
        <position position="113"/>
    </location>
</feature>
<feature type="modified residue" description="Phosphothreonine" evidence="1">
    <location>
        <position position="183"/>
    </location>
</feature>
<feature type="modified residue" description="N6-acetyllysine" evidence="1">
    <location>
        <position position="197"/>
    </location>
</feature>
<feature type="disulfide bond" description="Interchain (with C-173); in linked form" evidence="1">
    <location>
        <position position="52"/>
    </location>
</feature>
<feature type="disulfide bond" description="Interchain (with C-52); in linked form" evidence="1">
    <location>
        <position position="173"/>
    </location>
</feature>
<organism>
    <name type="scientific">Bos taurus</name>
    <name type="common">Bovine</name>
    <dbReference type="NCBI Taxonomy" id="9913"/>
    <lineage>
        <taxon>Eukaryota</taxon>
        <taxon>Metazoa</taxon>
        <taxon>Chordata</taxon>
        <taxon>Craniata</taxon>
        <taxon>Vertebrata</taxon>
        <taxon>Euteleostomi</taxon>
        <taxon>Mammalia</taxon>
        <taxon>Eutheria</taxon>
        <taxon>Laurasiatheria</taxon>
        <taxon>Artiodactyla</taxon>
        <taxon>Ruminantia</taxon>
        <taxon>Pecora</taxon>
        <taxon>Bovidae</taxon>
        <taxon>Bovinae</taxon>
        <taxon>Bos</taxon>
    </lineage>
</organism>
<keyword id="KW-0007">Acetylation</keyword>
<keyword id="KW-0049">Antioxidant</keyword>
<keyword id="KW-0963">Cytoplasm</keyword>
<keyword id="KW-1015">Disulfide bond</keyword>
<keyword id="KW-0560">Oxidoreductase</keyword>
<keyword id="KW-0575">Peroxidase</keyword>
<keyword id="KW-0597">Phosphoprotein</keyword>
<keyword id="KW-0676">Redox-active center</keyword>
<keyword id="KW-1185">Reference proteome</keyword>
<name>PRDX2_BOVIN</name>
<protein>
    <recommendedName>
        <fullName>Peroxiredoxin-2</fullName>
        <ecNumber evidence="1">1.11.1.24</ecNumber>
    </recommendedName>
    <alternativeName>
        <fullName evidence="4">Thioredoxin-dependent peroxiredoxin 2</fullName>
    </alternativeName>
</protein>
<evidence type="ECO:0000250" key="1">
    <source>
        <dbReference type="UniProtKB" id="P32119"/>
    </source>
</evidence>
<evidence type="ECO:0000250" key="2">
    <source>
        <dbReference type="UniProtKB" id="Q06830"/>
    </source>
</evidence>
<evidence type="ECO:0000255" key="3">
    <source>
        <dbReference type="PROSITE-ProRule" id="PRU00691"/>
    </source>
</evidence>
<evidence type="ECO:0000305" key="4"/>
<proteinExistence type="evidence at transcript level"/>
<gene>
    <name type="primary">PRDX2</name>
</gene>
<accession>Q9BGI3</accession>
<accession>Q3T0L0</accession>